<accession>Q9WX70</accession>
<evidence type="ECO:0000255" key="1"/>
<evidence type="ECO:0000305" key="2"/>
<sequence>MLQLNPTPPAPGRWRTILENDFFPKNRRRDIDGLRGLAIALVVLFHAGWLKGGFIGVDVFVVISGYFMGRSALMQHPFQPVRFVCRRLYRLLPALLCMVALVSAGMLWWVLQSDRADIALNGAYALVYLSNIWASGHVGYFQGQAVAYPFLHTWSLSLEMQFYAIIFIMALLLPLTRHRRLVLSAIFSASAAYCAYAWHTGDSQAYYNILDRLWQFALGTMVWMLPRPKLPRAAADAVYAAAVAVIVGAGLFYPLSYACPSWMTVFPCGAVVLIIMLPDTRVGRWCLVPLSPLGVISYSVYLWHWPGIVVANYLLFFQVHGAMMAGVLALVMVVSLLSYVLVERTGLDYENRAPVAARNRGAALLVAACLGLAAVLAYISHVSRVH</sequence>
<comment type="function">
    <text>May acylate a glucose moiety into cellulose fibrils, in cooperation with BcsABII and BcsCII.</text>
</comment>
<comment type="pathway">
    <text>Glycan metabolism; bacterial cellulose biosynthesis.</text>
</comment>
<comment type="subcellular location">
    <subcellularLocation>
        <location evidence="2">Cell inner membrane</location>
        <topology evidence="2">Multi-pass membrane protein</topology>
    </subcellularLocation>
</comment>
<comment type="similarity">
    <text evidence="2">Belongs to the acyltransferase 3 family.</text>
</comment>
<feature type="chain" id="PRO_0000208069" description="Putative membrane-bound transacylase BcsY">
    <location>
        <begin position="1"/>
        <end position="386"/>
    </location>
</feature>
<feature type="transmembrane region" description="Helical" evidence="1">
    <location>
        <begin position="37"/>
        <end position="57"/>
    </location>
</feature>
<feature type="transmembrane region" description="Helical" evidence="1">
    <location>
        <begin position="91"/>
        <end position="111"/>
    </location>
</feature>
<feature type="transmembrane region" description="Helical" evidence="1">
    <location>
        <begin position="118"/>
        <end position="138"/>
    </location>
</feature>
<feature type="transmembrane region" description="Helical" evidence="1">
    <location>
        <begin position="156"/>
        <end position="176"/>
    </location>
</feature>
<feature type="transmembrane region" description="Helical" evidence="1">
    <location>
        <begin position="181"/>
        <end position="201"/>
    </location>
</feature>
<feature type="transmembrane region" description="Helical" evidence="1">
    <location>
        <begin position="237"/>
        <end position="257"/>
    </location>
</feature>
<feature type="transmembrane region" description="Helical" evidence="1">
    <location>
        <begin position="258"/>
        <end position="278"/>
    </location>
</feature>
<feature type="transmembrane region" description="Helical" evidence="1">
    <location>
        <begin position="290"/>
        <end position="310"/>
    </location>
</feature>
<feature type="transmembrane region" description="Helical" evidence="1">
    <location>
        <begin position="322"/>
        <end position="342"/>
    </location>
</feature>
<feature type="transmembrane region" description="Helical" evidence="1">
    <location>
        <begin position="362"/>
        <end position="382"/>
    </location>
</feature>
<gene>
    <name type="primary">bcsY</name>
</gene>
<proteinExistence type="inferred from homology"/>
<dbReference type="EC" id="2.3.-.-"/>
<dbReference type="EMBL" id="AB015803">
    <property type="protein sequence ID" value="BAA77595.1"/>
    <property type="molecule type" value="Genomic_DNA"/>
</dbReference>
<dbReference type="STRING" id="1220579.GCA_001571345_02029"/>
<dbReference type="UniPathway" id="UPA00694"/>
<dbReference type="GO" id="GO:0005886">
    <property type="term" value="C:plasma membrane"/>
    <property type="evidence" value="ECO:0007669"/>
    <property type="project" value="UniProtKB-SubCell"/>
</dbReference>
<dbReference type="GO" id="GO:0016747">
    <property type="term" value="F:acyltransferase activity, transferring groups other than amino-acyl groups"/>
    <property type="evidence" value="ECO:0007669"/>
    <property type="project" value="InterPro"/>
</dbReference>
<dbReference type="GO" id="GO:0030244">
    <property type="term" value="P:cellulose biosynthetic process"/>
    <property type="evidence" value="ECO:0007669"/>
    <property type="project" value="UniProtKB-KW"/>
</dbReference>
<dbReference type="InterPro" id="IPR002656">
    <property type="entry name" value="Acyl_transf_3_dom"/>
</dbReference>
<dbReference type="InterPro" id="IPR050879">
    <property type="entry name" value="Acyltransferase_3"/>
</dbReference>
<dbReference type="PANTHER" id="PTHR23028">
    <property type="entry name" value="ACETYLTRANSFERASE"/>
    <property type="match status" value="1"/>
</dbReference>
<dbReference type="PANTHER" id="PTHR23028:SF53">
    <property type="entry name" value="ACYL_TRANSF_3 DOMAIN-CONTAINING PROTEIN"/>
    <property type="match status" value="1"/>
</dbReference>
<dbReference type="Pfam" id="PF01757">
    <property type="entry name" value="Acyl_transf_3"/>
    <property type="match status" value="1"/>
</dbReference>
<organism>
    <name type="scientific">Komagataeibacter xylinus</name>
    <name type="common">Gluconacetobacter xylinus</name>
    <dbReference type="NCBI Taxonomy" id="28448"/>
    <lineage>
        <taxon>Bacteria</taxon>
        <taxon>Pseudomonadati</taxon>
        <taxon>Pseudomonadota</taxon>
        <taxon>Alphaproteobacteria</taxon>
        <taxon>Acetobacterales</taxon>
        <taxon>Acetobacteraceae</taxon>
        <taxon>Komagataeibacter</taxon>
    </lineage>
</organism>
<reference key="1">
    <citation type="journal article" date="1999" name="DNA Res.">
        <title>Cloning of cellulose synthase genes from Acetobacter xylinum JCM 7664: implication of a novel set of cellulose synthase genes.</title>
        <authorList>
            <person name="Umeda Y."/>
            <person name="Hirano A."/>
            <person name="Ishibashi M."/>
            <person name="Akiyama H."/>
            <person name="Onizuka T."/>
            <person name="Ikeuchi M."/>
            <person name="Inoue Y."/>
        </authorList>
    </citation>
    <scope>NUCLEOTIDE SEQUENCE [GENOMIC DNA]</scope>
    <source>
        <strain>JCM 7664 / NBRC 13693</strain>
    </source>
</reference>
<protein>
    <recommendedName>
        <fullName>Putative membrane-bound transacylase BcsY</fullName>
        <ecNumber>2.3.-.-</ecNumber>
    </recommendedName>
</protein>
<name>BCSY_KOMXY</name>
<keyword id="KW-0012">Acyltransferase</keyword>
<keyword id="KW-0997">Cell inner membrane</keyword>
<keyword id="KW-1003">Cell membrane</keyword>
<keyword id="KW-0135">Cellulose biosynthesis</keyword>
<keyword id="KW-0472">Membrane</keyword>
<keyword id="KW-0808">Transferase</keyword>
<keyword id="KW-0812">Transmembrane</keyword>
<keyword id="KW-1133">Transmembrane helix</keyword>